<accession>A8H969</accession>
<proteinExistence type="inferred from homology"/>
<gene>
    <name evidence="1" type="primary">tatA</name>
    <name type="ordered locus">Spea_3795</name>
</gene>
<organism>
    <name type="scientific">Shewanella pealeana (strain ATCC 700345 / ANG-SQ1)</name>
    <dbReference type="NCBI Taxonomy" id="398579"/>
    <lineage>
        <taxon>Bacteria</taxon>
        <taxon>Pseudomonadati</taxon>
        <taxon>Pseudomonadota</taxon>
        <taxon>Gammaproteobacteria</taxon>
        <taxon>Alteromonadales</taxon>
        <taxon>Shewanellaceae</taxon>
        <taxon>Shewanella</taxon>
    </lineage>
</organism>
<protein>
    <recommendedName>
        <fullName evidence="1">Sec-independent protein translocase protein TatA</fullName>
    </recommendedName>
</protein>
<feature type="chain" id="PRO_1000078321" description="Sec-independent protein translocase protein TatA">
    <location>
        <begin position="1"/>
        <end position="89"/>
    </location>
</feature>
<feature type="transmembrane region" description="Helical" evidence="1">
    <location>
        <begin position="1"/>
        <end position="21"/>
    </location>
</feature>
<feature type="region of interest" description="Disordered" evidence="2">
    <location>
        <begin position="47"/>
        <end position="89"/>
    </location>
</feature>
<feature type="compositionally biased region" description="Basic and acidic residues" evidence="2">
    <location>
        <begin position="47"/>
        <end position="61"/>
    </location>
</feature>
<feature type="compositionally biased region" description="Low complexity" evidence="2">
    <location>
        <begin position="62"/>
        <end position="74"/>
    </location>
</feature>
<feature type="compositionally biased region" description="Basic and acidic residues" evidence="2">
    <location>
        <begin position="75"/>
        <end position="89"/>
    </location>
</feature>
<name>TATA_SHEPA</name>
<sequence length="89" mass="9361">MGGISIWQLLIIALIVVLLFGTKKLRSLGGDLGGAVKGFKNAMSSEEEKKALEENATDKPAADTAKVTETAKVAETAEKKAESKGKEQA</sequence>
<keyword id="KW-0997">Cell inner membrane</keyword>
<keyword id="KW-1003">Cell membrane</keyword>
<keyword id="KW-0472">Membrane</keyword>
<keyword id="KW-0653">Protein transport</keyword>
<keyword id="KW-1185">Reference proteome</keyword>
<keyword id="KW-0811">Translocation</keyword>
<keyword id="KW-0812">Transmembrane</keyword>
<keyword id="KW-1133">Transmembrane helix</keyword>
<keyword id="KW-0813">Transport</keyword>
<dbReference type="EMBL" id="CP000851">
    <property type="protein sequence ID" value="ABV89106.1"/>
    <property type="molecule type" value="Genomic_DNA"/>
</dbReference>
<dbReference type="RefSeq" id="WP_012156988.1">
    <property type="nucleotide sequence ID" value="NC_009901.1"/>
</dbReference>
<dbReference type="SMR" id="A8H969"/>
<dbReference type="STRING" id="398579.Spea_3795"/>
<dbReference type="KEGG" id="spl:Spea_3795"/>
<dbReference type="eggNOG" id="COG1826">
    <property type="taxonomic scope" value="Bacteria"/>
</dbReference>
<dbReference type="HOGENOM" id="CLU_086034_5_1_6"/>
<dbReference type="OrthoDB" id="7066617at2"/>
<dbReference type="Proteomes" id="UP000002608">
    <property type="component" value="Chromosome"/>
</dbReference>
<dbReference type="GO" id="GO:0033281">
    <property type="term" value="C:TAT protein transport complex"/>
    <property type="evidence" value="ECO:0007669"/>
    <property type="project" value="UniProtKB-UniRule"/>
</dbReference>
<dbReference type="GO" id="GO:0008320">
    <property type="term" value="F:protein transmembrane transporter activity"/>
    <property type="evidence" value="ECO:0007669"/>
    <property type="project" value="UniProtKB-UniRule"/>
</dbReference>
<dbReference type="GO" id="GO:0043953">
    <property type="term" value="P:protein transport by the Tat complex"/>
    <property type="evidence" value="ECO:0007669"/>
    <property type="project" value="UniProtKB-UniRule"/>
</dbReference>
<dbReference type="Gene3D" id="1.20.5.3310">
    <property type="match status" value="1"/>
</dbReference>
<dbReference type="HAMAP" id="MF_00236">
    <property type="entry name" value="TatA_E"/>
    <property type="match status" value="1"/>
</dbReference>
<dbReference type="InterPro" id="IPR003369">
    <property type="entry name" value="TatA/B/E"/>
</dbReference>
<dbReference type="InterPro" id="IPR006312">
    <property type="entry name" value="TatA/E"/>
</dbReference>
<dbReference type="NCBIfam" id="NF002813">
    <property type="entry name" value="PRK02958.1"/>
    <property type="match status" value="1"/>
</dbReference>
<dbReference type="NCBIfam" id="TIGR01411">
    <property type="entry name" value="tatAE"/>
    <property type="match status" value="1"/>
</dbReference>
<dbReference type="PANTHER" id="PTHR42982">
    <property type="entry name" value="SEC-INDEPENDENT PROTEIN TRANSLOCASE PROTEIN TATA"/>
    <property type="match status" value="1"/>
</dbReference>
<dbReference type="PANTHER" id="PTHR42982:SF1">
    <property type="entry name" value="SEC-INDEPENDENT PROTEIN TRANSLOCASE PROTEIN TATA"/>
    <property type="match status" value="1"/>
</dbReference>
<dbReference type="Pfam" id="PF02416">
    <property type="entry name" value="TatA_B_E"/>
    <property type="match status" value="1"/>
</dbReference>
<reference key="1">
    <citation type="submission" date="2007-10" db="EMBL/GenBank/DDBJ databases">
        <title>Complete sequence of Shewanella pealeana ATCC 700345.</title>
        <authorList>
            <consortium name="US DOE Joint Genome Institute"/>
            <person name="Copeland A."/>
            <person name="Lucas S."/>
            <person name="Lapidus A."/>
            <person name="Barry K."/>
            <person name="Glavina del Rio T."/>
            <person name="Dalin E."/>
            <person name="Tice H."/>
            <person name="Pitluck S."/>
            <person name="Chertkov O."/>
            <person name="Brettin T."/>
            <person name="Bruce D."/>
            <person name="Detter J.C."/>
            <person name="Han C."/>
            <person name="Schmutz J."/>
            <person name="Larimer F."/>
            <person name="Land M."/>
            <person name="Hauser L."/>
            <person name="Kyrpides N."/>
            <person name="Kim E."/>
            <person name="Zhao J.-S.Z."/>
            <person name="Manno D."/>
            <person name="Hawari J."/>
            <person name="Richardson P."/>
        </authorList>
    </citation>
    <scope>NUCLEOTIDE SEQUENCE [LARGE SCALE GENOMIC DNA]</scope>
    <source>
        <strain>ATCC 700345 / ANG-SQ1</strain>
    </source>
</reference>
<comment type="function">
    <text evidence="1">Part of the twin-arginine translocation (Tat) system that transports large folded proteins containing a characteristic twin-arginine motif in their signal peptide across membranes. TatA could form the protein-conducting channel of the Tat system.</text>
</comment>
<comment type="subunit">
    <text evidence="1">The Tat system comprises two distinct complexes: a TatABC complex, containing multiple copies of TatA, TatB and TatC subunits, and a separate TatA complex, containing only TatA subunits. Substrates initially bind to the TatABC complex, which probably triggers association of the separate TatA complex to form the active translocon.</text>
</comment>
<comment type="subcellular location">
    <subcellularLocation>
        <location evidence="1">Cell inner membrane</location>
        <topology evidence="1">Single-pass membrane protein</topology>
    </subcellularLocation>
</comment>
<comment type="similarity">
    <text evidence="1">Belongs to the TatA/E family.</text>
</comment>
<evidence type="ECO:0000255" key="1">
    <source>
        <dbReference type="HAMAP-Rule" id="MF_00236"/>
    </source>
</evidence>
<evidence type="ECO:0000256" key="2">
    <source>
        <dbReference type="SAM" id="MobiDB-lite"/>
    </source>
</evidence>